<evidence type="ECO:0000255" key="1">
    <source>
        <dbReference type="HAMAP-Rule" id="MF_01825"/>
    </source>
</evidence>
<comment type="function">
    <text evidence="1">Catalyzes the oxidation of erythronate-4-phosphate to 3-hydroxy-2-oxo-4-phosphonooxybutanoate.</text>
</comment>
<comment type="catalytic activity">
    <reaction evidence="1">
        <text>4-phospho-D-erythronate + NAD(+) = (R)-3-hydroxy-2-oxo-4-phosphooxybutanoate + NADH + H(+)</text>
        <dbReference type="Rhea" id="RHEA:18829"/>
        <dbReference type="ChEBI" id="CHEBI:15378"/>
        <dbReference type="ChEBI" id="CHEBI:57540"/>
        <dbReference type="ChEBI" id="CHEBI:57945"/>
        <dbReference type="ChEBI" id="CHEBI:58538"/>
        <dbReference type="ChEBI" id="CHEBI:58766"/>
        <dbReference type="EC" id="1.1.1.290"/>
    </reaction>
</comment>
<comment type="pathway">
    <text evidence="1">Cofactor biosynthesis; pyridoxine 5'-phosphate biosynthesis; pyridoxine 5'-phosphate from D-erythrose 4-phosphate: step 2/5.</text>
</comment>
<comment type="subunit">
    <text evidence="1">Homodimer.</text>
</comment>
<comment type="subcellular location">
    <subcellularLocation>
        <location evidence="1">Cytoplasm</location>
    </subcellularLocation>
</comment>
<comment type="similarity">
    <text evidence="1">Belongs to the D-isomer specific 2-hydroxyacid dehydrogenase family. PdxB subfamily.</text>
</comment>
<feature type="chain" id="PRO_0000297441" description="Erythronate-4-phosphate dehydrogenase">
    <location>
        <begin position="1"/>
        <end position="378"/>
    </location>
</feature>
<feature type="active site" evidence="1">
    <location>
        <position position="208"/>
    </location>
</feature>
<feature type="active site" evidence="1">
    <location>
        <position position="237"/>
    </location>
</feature>
<feature type="active site" description="Proton donor" evidence="1">
    <location>
        <position position="254"/>
    </location>
</feature>
<feature type="binding site" evidence="1">
    <location>
        <position position="45"/>
    </location>
    <ligand>
        <name>substrate</name>
    </ligand>
</feature>
<feature type="binding site" evidence="1">
    <location>
        <position position="66"/>
    </location>
    <ligand>
        <name>substrate</name>
    </ligand>
</feature>
<feature type="binding site" evidence="1">
    <location>
        <position position="146"/>
    </location>
    <ligand>
        <name>NAD(+)</name>
        <dbReference type="ChEBI" id="CHEBI:57540"/>
    </ligand>
</feature>
<feature type="binding site" evidence="1">
    <location>
        <position position="175"/>
    </location>
    <ligand>
        <name>NAD(+)</name>
        <dbReference type="ChEBI" id="CHEBI:57540"/>
    </ligand>
</feature>
<feature type="binding site" evidence="1">
    <location>
        <position position="232"/>
    </location>
    <ligand>
        <name>NAD(+)</name>
        <dbReference type="ChEBI" id="CHEBI:57540"/>
    </ligand>
</feature>
<feature type="binding site" evidence="1">
    <location>
        <position position="257"/>
    </location>
    <ligand>
        <name>NAD(+)</name>
        <dbReference type="ChEBI" id="CHEBI:57540"/>
    </ligand>
</feature>
<feature type="binding site" evidence="1">
    <location>
        <position position="258"/>
    </location>
    <ligand>
        <name>substrate</name>
    </ligand>
</feature>
<sequence length="378" mass="41319">MKILVDENMPYARDLFSRLGEVTAVPGRPIPVAQLADADALMVRSVTKVNESLLAGKPIKFVGTATAGTDHVDEAWLKQAGIGFSAAPGCNAIAVVEYVFSSLLMLAERDGFSLHERTVGIVGVGNVGRRLQARLEALGITTLLCDPPRADRGDEGDFRSLNELVQHADILTFHTPLFKDGPYKTLHLADEKLIRSLKPGAILINACRGAVVDNTALLTCLNEGQKLSVVLDVWEGEPELNVELLKKVDIGTPHIAGYTLEGKARGTTQVFEAYSKFIGHEQHVALDTLLPAPEFGRITLHGPLDQPTLKRLVHLVYDVRRDDAPLRKVAGIPGEFDKLRKNYLERREWSSLYVICDDASAASLLCKLGFNAVHHPAR</sequence>
<proteinExistence type="inferred from homology"/>
<keyword id="KW-0963">Cytoplasm</keyword>
<keyword id="KW-0520">NAD</keyword>
<keyword id="KW-0560">Oxidoreductase</keyword>
<keyword id="KW-0664">Pyridoxine biosynthesis</keyword>
<name>PDXB_ECOL5</name>
<organism>
    <name type="scientific">Escherichia coli O6:K15:H31 (strain 536 / UPEC)</name>
    <dbReference type="NCBI Taxonomy" id="362663"/>
    <lineage>
        <taxon>Bacteria</taxon>
        <taxon>Pseudomonadati</taxon>
        <taxon>Pseudomonadota</taxon>
        <taxon>Gammaproteobacteria</taxon>
        <taxon>Enterobacterales</taxon>
        <taxon>Enterobacteriaceae</taxon>
        <taxon>Escherichia</taxon>
    </lineage>
</organism>
<protein>
    <recommendedName>
        <fullName evidence="1">Erythronate-4-phosphate dehydrogenase</fullName>
        <ecNumber evidence="1">1.1.1.290</ecNumber>
    </recommendedName>
</protein>
<reference key="1">
    <citation type="journal article" date="2006" name="Mol. Microbiol.">
        <title>Role of pathogenicity island-associated integrases in the genome plasticity of uropathogenic Escherichia coli strain 536.</title>
        <authorList>
            <person name="Hochhut B."/>
            <person name="Wilde C."/>
            <person name="Balling G."/>
            <person name="Middendorf B."/>
            <person name="Dobrindt U."/>
            <person name="Brzuszkiewicz E."/>
            <person name="Gottschalk G."/>
            <person name="Carniel E."/>
            <person name="Hacker J."/>
        </authorList>
    </citation>
    <scope>NUCLEOTIDE SEQUENCE [LARGE SCALE GENOMIC DNA]</scope>
    <source>
        <strain>536 / UPEC</strain>
    </source>
</reference>
<gene>
    <name evidence="1" type="primary">pdxB</name>
    <name type="ordered locus">ECP_2359</name>
</gene>
<dbReference type="EC" id="1.1.1.290" evidence="1"/>
<dbReference type="EMBL" id="CP000247">
    <property type="protein sequence ID" value="ABG70353.1"/>
    <property type="molecule type" value="Genomic_DNA"/>
</dbReference>
<dbReference type="RefSeq" id="WP_000699143.1">
    <property type="nucleotide sequence ID" value="NC_008253.1"/>
</dbReference>
<dbReference type="SMR" id="Q0TFC6"/>
<dbReference type="KEGG" id="ecp:ECP_2359"/>
<dbReference type="HOGENOM" id="CLU_019796_4_0_6"/>
<dbReference type="UniPathway" id="UPA00244">
    <property type="reaction ID" value="UER00310"/>
</dbReference>
<dbReference type="Proteomes" id="UP000009182">
    <property type="component" value="Chromosome"/>
</dbReference>
<dbReference type="GO" id="GO:0005829">
    <property type="term" value="C:cytosol"/>
    <property type="evidence" value="ECO:0007669"/>
    <property type="project" value="TreeGrafter"/>
</dbReference>
<dbReference type="GO" id="GO:0033711">
    <property type="term" value="F:4-phosphoerythronate dehydrogenase activity"/>
    <property type="evidence" value="ECO:0007669"/>
    <property type="project" value="UniProtKB-EC"/>
</dbReference>
<dbReference type="GO" id="GO:0051287">
    <property type="term" value="F:NAD binding"/>
    <property type="evidence" value="ECO:0007669"/>
    <property type="project" value="InterPro"/>
</dbReference>
<dbReference type="GO" id="GO:0046983">
    <property type="term" value="F:protein dimerization activity"/>
    <property type="evidence" value="ECO:0007669"/>
    <property type="project" value="InterPro"/>
</dbReference>
<dbReference type="GO" id="GO:0036001">
    <property type="term" value="P:'de novo' pyridoxal 5'-phosphate biosynthetic process"/>
    <property type="evidence" value="ECO:0007669"/>
    <property type="project" value="TreeGrafter"/>
</dbReference>
<dbReference type="GO" id="GO:0008615">
    <property type="term" value="P:pyridoxine biosynthetic process"/>
    <property type="evidence" value="ECO:0007669"/>
    <property type="project" value="UniProtKB-UniRule"/>
</dbReference>
<dbReference type="CDD" id="cd12158">
    <property type="entry name" value="ErythrP_dh"/>
    <property type="match status" value="1"/>
</dbReference>
<dbReference type="FunFam" id="3.30.1370.170:FF:000001">
    <property type="entry name" value="Erythronate-4-phosphate dehydrogenase"/>
    <property type="match status" value="1"/>
</dbReference>
<dbReference type="FunFam" id="3.40.50.720:FF:000093">
    <property type="entry name" value="Erythronate-4-phosphate dehydrogenase"/>
    <property type="match status" value="1"/>
</dbReference>
<dbReference type="Gene3D" id="3.30.1370.170">
    <property type="match status" value="1"/>
</dbReference>
<dbReference type="Gene3D" id="3.40.50.720">
    <property type="entry name" value="NAD(P)-binding Rossmann-like Domain"/>
    <property type="match status" value="2"/>
</dbReference>
<dbReference type="HAMAP" id="MF_01825">
    <property type="entry name" value="PdxB"/>
    <property type="match status" value="1"/>
</dbReference>
<dbReference type="InterPro" id="IPR006139">
    <property type="entry name" value="D-isomer_2_OHA_DH_cat_dom"/>
</dbReference>
<dbReference type="InterPro" id="IPR029753">
    <property type="entry name" value="D-isomer_DH_CS"/>
</dbReference>
<dbReference type="InterPro" id="IPR029752">
    <property type="entry name" value="D-isomer_DH_CS1"/>
</dbReference>
<dbReference type="InterPro" id="IPR006140">
    <property type="entry name" value="D-isomer_DH_NAD-bd"/>
</dbReference>
<dbReference type="InterPro" id="IPR020921">
    <property type="entry name" value="Erythronate-4-P_DHase"/>
</dbReference>
<dbReference type="InterPro" id="IPR024531">
    <property type="entry name" value="Erythronate-4-P_DHase_dimer"/>
</dbReference>
<dbReference type="InterPro" id="IPR036291">
    <property type="entry name" value="NAD(P)-bd_dom_sf"/>
</dbReference>
<dbReference type="InterPro" id="IPR038251">
    <property type="entry name" value="PdxB_dimer_sf"/>
</dbReference>
<dbReference type="NCBIfam" id="NF001309">
    <property type="entry name" value="PRK00257.1"/>
    <property type="match status" value="1"/>
</dbReference>
<dbReference type="NCBIfam" id="NF011966">
    <property type="entry name" value="PRK15438.1"/>
    <property type="match status" value="1"/>
</dbReference>
<dbReference type="PANTHER" id="PTHR42938">
    <property type="entry name" value="FORMATE DEHYDROGENASE 1"/>
    <property type="match status" value="1"/>
</dbReference>
<dbReference type="PANTHER" id="PTHR42938:SF9">
    <property type="entry name" value="FORMATE DEHYDROGENASE 1"/>
    <property type="match status" value="1"/>
</dbReference>
<dbReference type="Pfam" id="PF00389">
    <property type="entry name" value="2-Hacid_dh"/>
    <property type="match status" value="1"/>
</dbReference>
<dbReference type="Pfam" id="PF02826">
    <property type="entry name" value="2-Hacid_dh_C"/>
    <property type="match status" value="1"/>
</dbReference>
<dbReference type="Pfam" id="PF11890">
    <property type="entry name" value="DUF3410"/>
    <property type="match status" value="1"/>
</dbReference>
<dbReference type="SUPFAM" id="SSF52283">
    <property type="entry name" value="Formate/glycerate dehydrogenase catalytic domain-like"/>
    <property type="match status" value="1"/>
</dbReference>
<dbReference type="SUPFAM" id="SSF51735">
    <property type="entry name" value="NAD(P)-binding Rossmann-fold domains"/>
    <property type="match status" value="1"/>
</dbReference>
<dbReference type="PROSITE" id="PS00065">
    <property type="entry name" value="D_2_HYDROXYACID_DH_1"/>
    <property type="match status" value="1"/>
</dbReference>
<dbReference type="PROSITE" id="PS00671">
    <property type="entry name" value="D_2_HYDROXYACID_DH_3"/>
    <property type="match status" value="1"/>
</dbReference>
<accession>Q0TFC6</accession>